<keyword id="KW-0072">Autophagy</keyword>
<keyword id="KW-0121">Carboxypeptidase</keyword>
<keyword id="KW-1015">Disulfide bond</keyword>
<keyword id="KW-0325">Glycoprotein</keyword>
<keyword id="KW-0378">Hydrolase</keyword>
<keyword id="KW-0645">Protease</keyword>
<keyword id="KW-1185">Reference proteome</keyword>
<keyword id="KW-0732">Signal</keyword>
<keyword id="KW-0926">Vacuole</keyword>
<name>ATG42_YEAST</name>
<feature type="signal peptide" evidence="2">
    <location>
        <begin position="1"/>
        <end position="24"/>
    </location>
</feature>
<feature type="chain" id="PRO_0000120563" description="Vacuolar serine-type carboxypeptidase ATG42">
    <location>
        <begin position="25"/>
        <end position="508"/>
    </location>
</feature>
<feature type="active site" evidence="8">
    <location>
        <position position="219"/>
    </location>
</feature>
<feature type="active site" evidence="8">
    <location>
        <position position="415"/>
    </location>
</feature>
<feature type="active site" evidence="8">
    <location>
        <position position="474"/>
    </location>
</feature>
<feature type="binding site" evidence="1">
    <location>
        <position position="418"/>
    </location>
    <ligand>
        <name>substrate</name>
    </ligand>
</feature>
<feature type="binding site" evidence="1">
    <location>
        <position position="475"/>
    </location>
    <ligand>
        <name>substrate</name>
    </ligand>
</feature>
<feature type="glycosylation site" description="N-linked (GlcNAc...) asparagine" evidence="3 8">
    <location>
        <position position="163"/>
    </location>
</feature>
<feature type="glycosylation site" description="N-linked (GlcNAc...) asparagine" evidence="3 8">
    <location>
        <position position="242"/>
    </location>
</feature>
<feature type="glycosylation site" description="N-linked (GlcNAc...) asparagine" evidence="3">
    <location>
        <position position="339"/>
    </location>
</feature>
<feature type="glycosylation site" description="N-linked (GlcNAc...) asparagine" evidence="3">
    <location>
        <position position="371"/>
    </location>
</feature>
<feature type="disulfide bond" evidence="1">
    <location>
        <begin position="132"/>
        <end position="375"/>
    </location>
</feature>
<feature type="disulfide bond" evidence="1">
    <location>
        <begin position="267"/>
        <end position="281"/>
    </location>
</feature>
<feature type="disulfide bond" evidence="1">
    <location>
        <begin position="291"/>
        <end position="314"/>
    </location>
</feature>
<feature type="disulfide bond" evidence="1">
    <location>
        <begin position="298"/>
        <end position="307"/>
    </location>
</feature>
<feature type="disulfide bond" evidence="1">
    <location>
        <begin position="336"/>
        <end position="345"/>
    </location>
</feature>
<feature type="mutagenesis site" description="Reduces the glycolation level." evidence="8">
    <original>N</original>
    <variation>Q</variation>
    <location>
        <position position="163"/>
    </location>
</feature>
<feature type="mutagenesis site" description="Leads to partial block in enzymatic activity." evidence="8">
    <original>S</original>
    <variation>A</variation>
    <location>
        <position position="219"/>
    </location>
</feature>
<feature type="mutagenesis site" description="Reduces the glycolation level." evidence="8">
    <original>N</original>
    <variation>Q</variation>
    <location>
        <position position="242"/>
    </location>
</feature>
<feature type="mutagenesis site" description="Leads to partial block in enzymatic activity." evidence="8">
    <original>D</original>
    <variation>A</variation>
    <location>
        <position position="415"/>
    </location>
</feature>
<feature type="mutagenesis site" description="Leads to partial block in enzymatic activity." evidence="8">
    <original>H</original>
    <variation>A</variation>
    <location>
        <position position="474"/>
    </location>
</feature>
<comment type="function">
    <text evidence="6 7 8">Vacuolar serine-type carboxypeptidase involved in vacuolar zymogen activation, breakdown of the autophagic body, and autophagosome-dependent protein synthesis (PubMed:29514932). Plays a key role in phytochelatin (PC) synthesis from glutathione (GSH) by cleaving the Gly from GSH and form the PC-peptides of the structure (gamma-Glu-Cys)2-Gly (PubMed:17408619). Also involved in resistance to xenobiotics via the degradation of glutathione-S-conjugates (PubMed:19897216).</text>
</comment>
<comment type="catalytic activity">
    <reaction evidence="8">
        <text>Release of a C-terminal amino acid with broad specificity.</text>
        <dbReference type="EC" id="3.4.16.5"/>
    </reaction>
</comment>
<comment type="subcellular location">
    <subcellularLocation>
        <location evidence="8">Vacuole lumen</location>
    </subcellularLocation>
    <text evidence="8">The vacuolar sorting receptor VPS10 is required for the delivery of ATG42 to the vacuole lumen.</text>
</comment>
<comment type="induction">
    <text evidence="5">Expression is induced by nitrogen limitation in a GLN3 and GAT1-independent manner.</text>
</comment>
<comment type="disruption phenotype">
    <text evidence="6 7 8">Leads to vacuolar defects as well as defects in the terminal steps of autophagy, when PCR1 is also deleted (PubMed:29514932). The PCR1/ATG42 double deletion also abrogates the production ofphytochelatin and the degradation of glutathione-S-conjugates (PubMed:17408619, PubMed:19897216).</text>
</comment>
<comment type="miscellaneous">
    <text evidence="4">Present with 1420 molecules/cell in log phase SD medium.</text>
</comment>
<comment type="similarity">
    <text evidence="11">Belongs to the peptidase S10 family.</text>
</comment>
<evidence type="ECO:0000250" key="1">
    <source>
        <dbReference type="UniProtKB" id="P00729"/>
    </source>
</evidence>
<evidence type="ECO:0000255" key="2"/>
<evidence type="ECO:0000255" key="3">
    <source>
        <dbReference type="PROSITE-ProRule" id="PRU00498"/>
    </source>
</evidence>
<evidence type="ECO:0000269" key="4">
    <source>
    </source>
</evidence>
<evidence type="ECO:0000269" key="5">
    <source>
    </source>
</evidence>
<evidence type="ECO:0000269" key="6">
    <source>
    </source>
</evidence>
<evidence type="ECO:0000269" key="7">
    <source>
    </source>
</evidence>
<evidence type="ECO:0000269" key="8">
    <source>
    </source>
</evidence>
<evidence type="ECO:0000303" key="9">
    <source>
    </source>
</evidence>
<evidence type="ECO:0000303" key="10">
    <source>
    </source>
</evidence>
<evidence type="ECO:0000305" key="11"/>
<gene>
    <name evidence="10" type="primary">ATG42</name>
    <name type="ordered locus">YBR139W</name>
    <name type="ORF">YBR1015</name>
</gene>
<sequence length="508" mass="57639">MKYLNLVFVLQLLISIKYASFGRAFSLFEDDTTFANLDKQLKLPQNTQQTLKLDRLNHDDPLFTTFISSVDTDYSLRLRTVDPSKLGIDTVKQWSGYMDYKDSKHFFYWFFESRNDPANDPIILWLNGGPGCSSFTGLLFELGPSSIGADMKPIHNPYSWNNNASMIFLEQPLGVGFSYGDEKVSSTKLAGKDAYIFLELFFEAFPHLRSNDFHIAGESYAGHYIPQIAHEIVVKNPERTFNLTSVMIGNGITDPLIQADYYEPMACGKGGYHPVLSSEECEKMSKAAGRCRRLNKLCYASKSSLPCIVATAYCDSALLEPYINTGLNVYDIRGPCEDNSTDGMCYTGLRYVDQYMNFPEVQETLGSDVHNYSGCDNDVFTGFLFTGDGSKPFQQYIAELLNHNIPVLIYAGDKDYICNWLGNHAWSNELEWINKRRYQRRMLRPWVSKETGEELGQVKNYGPFTFLRIYDAGHMVPYDQPEASLEMVNSWISGNRAFSDLSTLENAS</sequence>
<proteinExistence type="evidence at protein level"/>
<protein>
    <recommendedName>
        <fullName evidence="10">Vacuolar serine-type carboxypeptidase ATG42</fullName>
        <ecNumber evidence="8">3.4.16.5</ecNumber>
    </recommendedName>
    <alternativeName>
        <fullName evidence="9">Carboxypeptidase C</fullName>
        <shortName evidence="9">CPC</shortName>
    </alternativeName>
</protein>
<dbReference type="EC" id="3.4.16.5" evidence="8"/>
<dbReference type="EMBL" id="X75891">
    <property type="protein sequence ID" value="CAA53497.1"/>
    <property type="molecule type" value="Genomic_DNA"/>
</dbReference>
<dbReference type="EMBL" id="Z36008">
    <property type="protein sequence ID" value="CAA85097.1"/>
    <property type="molecule type" value="Genomic_DNA"/>
</dbReference>
<dbReference type="EMBL" id="AY692681">
    <property type="protein sequence ID" value="AAT92700.1"/>
    <property type="molecule type" value="Genomic_DNA"/>
</dbReference>
<dbReference type="EMBL" id="BK006936">
    <property type="protein sequence ID" value="DAA07255.1"/>
    <property type="molecule type" value="Genomic_DNA"/>
</dbReference>
<dbReference type="PIR" id="S46008">
    <property type="entry name" value="S46008"/>
</dbReference>
<dbReference type="RefSeq" id="NP_009697.3">
    <property type="nucleotide sequence ID" value="NM_001178487.3"/>
</dbReference>
<dbReference type="SMR" id="P38109"/>
<dbReference type="BioGRID" id="32839">
    <property type="interactions" value="142"/>
</dbReference>
<dbReference type="DIP" id="DIP-4923N"/>
<dbReference type="FunCoup" id="P38109">
    <property type="interactions" value="964"/>
</dbReference>
<dbReference type="IntAct" id="P38109">
    <property type="interactions" value="7"/>
</dbReference>
<dbReference type="MINT" id="P38109"/>
<dbReference type="STRING" id="4932.YBR139W"/>
<dbReference type="ESTHER" id="yeast-yby9">
    <property type="family name" value="Carboxypeptidase_S10"/>
</dbReference>
<dbReference type="MEROPS" id="S10.A49"/>
<dbReference type="GlyCosmos" id="P38109">
    <property type="glycosylation" value="4 sites, No reported glycans"/>
</dbReference>
<dbReference type="GlyGen" id="P38109">
    <property type="glycosylation" value="4 sites"/>
</dbReference>
<dbReference type="iPTMnet" id="P38109"/>
<dbReference type="PaxDb" id="4932-YBR139W"/>
<dbReference type="PeptideAtlas" id="P38109"/>
<dbReference type="EnsemblFungi" id="YBR139W_mRNA">
    <property type="protein sequence ID" value="YBR139W"/>
    <property type="gene ID" value="YBR139W"/>
</dbReference>
<dbReference type="GeneID" id="852436"/>
<dbReference type="KEGG" id="sce:YBR139W"/>
<dbReference type="AGR" id="SGD:S000000343"/>
<dbReference type="SGD" id="S000000343">
    <property type="gene designation" value="ATG42"/>
</dbReference>
<dbReference type="VEuPathDB" id="FungiDB:YBR139W"/>
<dbReference type="eggNOG" id="KOG1282">
    <property type="taxonomic scope" value="Eukaryota"/>
</dbReference>
<dbReference type="HOGENOM" id="CLU_008523_10_4_1"/>
<dbReference type="InParanoid" id="P38109"/>
<dbReference type="OMA" id="TSCDDTV"/>
<dbReference type="OrthoDB" id="443318at2759"/>
<dbReference type="BioCyc" id="MetaCyc:G3O-29093-MONOMER"/>
<dbReference type="BioCyc" id="YEAST:G3O-29093-MONOMER"/>
<dbReference type="BioGRID-ORCS" id="852436">
    <property type="hits" value="0 hits in 10 CRISPR screens"/>
</dbReference>
<dbReference type="PRO" id="PR:P38109"/>
<dbReference type="Proteomes" id="UP000002311">
    <property type="component" value="Chromosome II"/>
</dbReference>
<dbReference type="RNAct" id="P38109">
    <property type="molecule type" value="protein"/>
</dbReference>
<dbReference type="GO" id="GO:0000324">
    <property type="term" value="C:fungal-type vacuole"/>
    <property type="evidence" value="ECO:0007005"/>
    <property type="project" value="SGD"/>
</dbReference>
<dbReference type="GO" id="GO:0000328">
    <property type="term" value="C:fungal-type vacuole lumen"/>
    <property type="evidence" value="ECO:0000314"/>
    <property type="project" value="SGD"/>
</dbReference>
<dbReference type="GO" id="GO:0005775">
    <property type="term" value="C:vacuolar lumen"/>
    <property type="evidence" value="ECO:0000316"/>
    <property type="project" value="SGD"/>
</dbReference>
<dbReference type="GO" id="GO:0017171">
    <property type="term" value="F:serine hydrolase activity"/>
    <property type="evidence" value="ECO:0007005"/>
    <property type="project" value="SGD"/>
</dbReference>
<dbReference type="GO" id="GO:0004185">
    <property type="term" value="F:serine-type carboxypeptidase activity"/>
    <property type="evidence" value="ECO:0000316"/>
    <property type="project" value="SGD"/>
</dbReference>
<dbReference type="GO" id="GO:0006995">
    <property type="term" value="P:cellular response to nitrogen starvation"/>
    <property type="evidence" value="ECO:0000316"/>
    <property type="project" value="SGD"/>
</dbReference>
<dbReference type="GO" id="GO:0016236">
    <property type="term" value="P:macroautophagy"/>
    <property type="evidence" value="ECO:0000316"/>
    <property type="project" value="SGD"/>
</dbReference>
<dbReference type="GO" id="GO:0046938">
    <property type="term" value="P:phytochelatin biosynthetic process"/>
    <property type="evidence" value="ECO:0000316"/>
    <property type="project" value="SGD"/>
</dbReference>
<dbReference type="GO" id="GO:0031638">
    <property type="term" value="P:zymogen activation"/>
    <property type="evidence" value="ECO:0000316"/>
    <property type="project" value="SGD"/>
</dbReference>
<dbReference type="FunFam" id="1.10.287.410:FF:000001">
    <property type="entry name" value="Carboxypeptidase Y"/>
    <property type="match status" value="1"/>
</dbReference>
<dbReference type="Gene3D" id="1.10.287.410">
    <property type="match status" value="1"/>
</dbReference>
<dbReference type="Gene3D" id="3.40.50.1820">
    <property type="entry name" value="alpha/beta hydrolase"/>
    <property type="match status" value="1"/>
</dbReference>
<dbReference type="InterPro" id="IPR029058">
    <property type="entry name" value="AB_hydrolase_fold"/>
</dbReference>
<dbReference type="InterPro" id="IPR001563">
    <property type="entry name" value="Peptidase_S10"/>
</dbReference>
<dbReference type="InterPro" id="IPR033124">
    <property type="entry name" value="Ser_caboxypep_his_AS"/>
</dbReference>
<dbReference type="InterPro" id="IPR018202">
    <property type="entry name" value="Ser_caboxypep_ser_AS"/>
</dbReference>
<dbReference type="PANTHER" id="PTHR11802">
    <property type="entry name" value="SERINE PROTEASE FAMILY S10 SERINE CARBOXYPEPTIDASE"/>
    <property type="match status" value="1"/>
</dbReference>
<dbReference type="PANTHER" id="PTHR11802:SF51">
    <property type="entry name" value="VACUOLAR SERINE-TYPE CARBOXYPEPTIDASE ATG42"/>
    <property type="match status" value="1"/>
</dbReference>
<dbReference type="Pfam" id="PF00450">
    <property type="entry name" value="Peptidase_S10"/>
    <property type="match status" value="1"/>
</dbReference>
<dbReference type="PRINTS" id="PR00724">
    <property type="entry name" value="CRBOXYPTASEC"/>
</dbReference>
<dbReference type="SUPFAM" id="SSF53474">
    <property type="entry name" value="alpha/beta-Hydrolases"/>
    <property type="match status" value="1"/>
</dbReference>
<dbReference type="PROSITE" id="PS00560">
    <property type="entry name" value="CARBOXYPEPT_SER_HIS"/>
    <property type="match status" value="1"/>
</dbReference>
<dbReference type="PROSITE" id="PS00131">
    <property type="entry name" value="CARBOXYPEPT_SER_SER"/>
    <property type="match status" value="1"/>
</dbReference>
<reference key="1">
    <citation type="journal article" date="1994" name="Yeast">
        <title>The sequence of 29.7 kb from the right arm of chromosome II reveals 13 complete open reading frames, of which ten correspond to new genes.</title>
        <authorList>
            <person name="Becam A.-M."/>
            <person name="Cullin C."/>
            <person name="Grzybowska E."/>
            <person name="Lacroute F."/>
            <person name="Nasr F."/>
            <person name="Ozier-Kalogeropoulos O."/>
            <person name="Palucha A."/>
            <person name="Slonimski P.P."/>
            <person name="Zagulski M."/>
            <person name="Herbert C.J."/>
        </authorList>
    </citation>
    <scope>NUCLEOTIDE SEQUENCE [GENOMIC DNA]</scope>
    <source>
        <strain>ATCC 204508 / S288c</strain>
    </source>
</reference>
<reference key="2">
    <citation type="journal article" date="1994" name="EMBO J.">
        <title>Complete DNA sequence of yeast chromosome II.</title>
        <authorList>
            <person name="Feldmann H."/>
            <person name="Aigle M."/>
            <person name="Aljinovic G."/>
            <person name="Andre B."/>
            <person name="Baclet M.C."/>
            <person name="Barthe C."/>
            <person name="Baur A."/>
            <person name="Becam A.-M."/>
            <person name="Biteau N."/>
            <person name="Boles E."/>
            <person name="Brandt T."/>
            <person name="Brendel M."/>
            <person name="Brueckner M."/>
            <person name="Bussereau F."/>
            <person name="Christiansen C."/>
            <person name="Contreras R."/>
            <person name="Crouzet M."/>
            <person name="Cziepluch C."/>
            <person name="Demolis N."/>
            <person name="Delaveau T."/>
            <person name="Doignon F."/>
            <person name="Domdey H."/>
            <person name="Duesterhus S."/>
            <person name="Dubois E."/>
            <person name="Dujon B."/>
            <person name="El Bakkoury M."/>
            <person name="Entian K.-D."/>
            <person name="Feuermann M."/>
            <person name="Fiers W."/>
            <person name="Fobo G.M."/>
            <person name="Fritz C."/>
            <person name="Gassenhuber J."/>
            <person name="Glansdorff N."/>
            <person name="Goffeau A."/>
            <person name="Grivell L.A."/>
            <person name="de Haan M."/>
            <person name="Hein C."/>
            <person name="Herbert C.J."/>
            <person name="Hollenberg C.P."/>
            <person name="Holmstroem K."/>
            <person name="Jacq C."/>
            <person name="Jacquet M."/>
            <person name="Jauniaux J.-C."/>
            <person name="Jonniaux J.-L."/>
            <person name="Kallesoee T."/>
            <person name="Kiesau P."/>
            <person name="Kirchrath L."/>
            <person name="Koetter P."/>
            <person name="Korol S."/>
            <person name="Liebl S."/>
            <person name="Logghe M."/>
            <person name="Lohan A.J.E."/>
            <person name="Louis E.J."/>
            <person name="Li Z.Y."/>
            <person name="Maat M.J."/>
            <person name="Mallet L."/>
            <person name="Mannhaupt G."/>
            <person name="Messenguy F."/>
            <person name="Miosga T."/>
            <person name="Molemans F."/>
            <person name="Mueller S."/>
            <person name="Nasr F."/>
            <person name="Obermaier B."/>
            <person name="Perea J."/>
            <person name="Pierard A."/>
            <person name="Piravandi E."/>
            <person name="Pohl F.M."/>
            <person name="Pohl T.M."/>
            <person name="Potier S."/>
            <person name="Proft M."/>
            <person name="Purnelle B."/>
            <person name="Ramezani Rad M."/>
            <person name="Rieger M."/>
            <person name="Rose M."/>
            <person name="Schaaff-Gerstenschlaeger I."/>
            <person name="Scherens B."/>
            <person name="Schwarzlose C."/>
            <person name="Skala J."/>
            <person name="Slonimski P.P."/>
            <person name="Smits P.H.M."/>
            <person name="Souciet J.-L."/>
            <person name="Steensma H.Y."/>
            <person name="Stucka R."/>
            <person name="Urrestarazu L.A."/>
            <person name="van der Aart Q.J.M."/>
            <person name="Van Dyck L."/>
            <person name="Vassarotti A."/>
            <person name="Vetter I."/>
            <person name="Vierendeels F."/>
            <person name="Vissers S."/>
            <person name="Wagner G."/>
            <person name="de Wergifosse P."/>
            <person name="Wolfe K.H."/>
            <person name="Zagulski M."/>
            <person name="Zimmermann F.K."/>
            <person name="Mewes H.-W."/>
            <person name="Kleine K."/>
        </authorList>
    </citation>
    <scope>NUCLEOTIDE SEQUENCE [LARGE SCALE GENOMIC DNA]</scope>
    <source>
        <strain>ATCC 204508 / S288c</strain>
    </source>
</reference>
<reference key="3">
    <citation type="journal article" date="2014" name="G3 (Bethesda)">
        <title>The reference genome sequence of Saccharomyces cerevisiae: Then and now.</title>
        <authorList>
            <person name="Engel S.R."/>
            <person name="Dietrich F.S."/>
            <person name="Fisk D.G."/>
            <person name="Binkley G."/>
            <person name="Balakrishnan R."/>
            <person name="Costanzo M.C."/>
            <person name="Dwight S.S."/>
            <person name="Hitz B.C."/>
            <person name="Karra K."/>
            <person name="Nash R.S."/>
            <person name="Weng S."/>
            <person name="Wong E.D."/>
            <person name="Lloyd P."/>
            <person name="Skrzypek M.S."/>
            <person name="Miyasato S.R."/>
            <person name="Simison M."/>
            <person name="Cherry J.M."/>
        </authorList>
    </citation>
    <scope>GENOME REANNOTATION</scope>
    <source>
        <strain>ATCC 204508 / S288c</strain>
    </source>
</reference>
<reference key="4">
    <citation type="journal article" date="2007" name="Genome Res.">
        <title>Approaching a complete repository of sequence-verified protein-encoding clones for Saccharomyces cerevisiae.</title>
        <authorList>
            <person name="Hu Y."/>
            <person name="Rolfs A."/>
            <person name="Bhullar B."/>
            <person name="Murthy T.V.S."/>
            <person name="Zhu C."/>
            <person name="Berger M.F."/>
            <person name="Camargo A.A."/>
            <person name="Kelley F."/>
            <person name="McCarron S."/>
            <person name="Jepson D."/>
            <person name="Richardson A."/>
            <person name="Raphael J."/>
            <person name="Moreira D."/>
            <person name="Taycher E."/>
            <person name="Zuo D."/>
            <person name="Mohr S."/>
            <person name="Kane M.F."/>
            <person name="Williamson J."/>
            <person name="Simpson A.J.G."/>
            <person name="Bulyk M.L."/>
            <person name="Harlow E."/>
            <person name="Marsischky G."/>
            <person name="Kolodner R.D."/>
            <person name="LaBaer J."/>
        </authorList>
    </citation>
    <scope>NUCLEOTIDE SEQUENCE [GENOMIC DNA]</scope>
    <source>
        <strain>ATCC 204508 / S288c</strain>
    </source>
</reference>
<reference key="5">
    <citation type="journal article" date="1994" name="Curr. Genet.">
        <title>An analysis of the sequence of part of the right arm of chromosome II of S. cerevisiae reveals new genes encoding an amino-acid permease and a carboxypeptidase.</title>
        <authorList>
            <person name="Nasr F."/>
            <person name="Becam A.-M."/>
            <person name="Grzybowska E."/>
            <person name="Zagulski M."/>
            <person name="Slonimski P.P."/>
            <person name="Herbert C.J."/>
        </authorList>
    </citation>
    <scope>DISCUSSION OF SEQUENCE</scope>
</reference>
<reference key="6">
    <citation type="journal article" date="2003" name="Nature">
        <title>Global analysis of protein expression in yeast.</title>
        <authorList>
            <person name="Ghaemmaghami S."/>
            <person name="Huh W.-K."/>
            <person name="Bower K."/>
            <person name="Howson R.W."/>
            <person name="Belle A."/>
            <person name="Dephoure N."/>
            <person name="O'Shea E.K."/>
            <person name="Weissman J.S."/>
        </authorList>
    </citation>
    <scope>LEVEL OF PROTEIN EXPRESSION [LARGE SCALE ANALYSIS]</scope>
</reference>
<reference key="7">
    <citation type="journal article" date="2006" name="FEMS Yeast Res.">
        <title>Identification of direct and indirect targets of the Gln3 and Gat1 activators by transcriptional profiling in response to nitrogen availability in the short and long term.</title>
        <authorList>
            <person name="Scherens B."/>
            <person name="Feller A."/>
            <person name="Vierendeels F."/>
            <person name="Messenguy F."/>
            <person name="Dubois E."/>
        </authorList>
    </citation>
    <scope>INDUCTION</scope>
</reference>
<reference key="8">
    <citation type="journal article" date="2007" name="FEBS Lett.">
        <title>Phytochelatins are synthesized by two vacuolar serine carboxypeptidases in Saccharomyces cerevisiae.</title>
        <authorList>
            <person name="Wuenschmann J."/>
            <person name="Beck A."/>
            <person name="Meyer L."/>
            <person name="Letzel T."/>
            <person name="Grill E."/>
            <person name="Lendzian K.J."/>
        </authorList>
    </citation>
    <scope>FUNCTION</scope>
    <scope>DISRUPTION PHENOTYPE</scope>
</reference>
<reference key="9">
    <citation type="journal article" date="2010" name="Phytochemistry">
        <title>Dissection of glutathione conjugate turnover in yeast.</title>
        <authorList>
            <person name="Wuenschmann J."/>
            <person name="Krajewski M."/>
            <person name="Letzel T."/>
            <person name="Huber E.M."/>
            <person name="Ehrmann A."/>
            <person name="Grill E."/>
            <person name="Lendzian K.J."/>
        </authorList>
    </citation>
    <scope>FUNCTION</scope>
    <scope>DISRUPTION PHENOTYPE</scope>
</reference>
<reference key="10">
    <citation type="journal article" date="2018" name="Mol. Biol. Cell">
        <title>A newly characterized vacuolar serine carboxypeptidase, Atg42/Ybr139w, is required for normal vacuole function and the terminal steps of autophagy in the yeast Saccharomyces cerevisiae.</title>
        <authorList>
            <person name="Parzych K.R."/>
            <person name="Ariosa A."/>
            <person name="Mari M."/>
            <person name="Klionsky D.J."/>
        </authorList>
    </citation>
    <scope>SUBCELLULAR LOCATION</scope>
    <scope>GLYCOSYLATION AT ASN-163 AND ASN-242</scope>
    <scope>FUNCTION</scope>
    <scope>DISRUPTION PHENOTYPE</scope>
    <scope>CATALYTIC ACTIVITY</scope>
    <scope>ACTIVE SITE</scope>
    <scope>MUTAGENESIS OF ASN-163; SER-219; ASN-242; ASP-415 AND HIS-474</scope>
</reference>
<accession>P38109</accession>
<accession>D6VQD5</accession>
<organism>
    <name type="scientific">Saccharomyces cerevisiae (strain ATCC 204508 / S288c)</name>
    <name type="common">Baker's yeast</name>
    <dbReference type="NCBI Taxonomy" id="559292"/>
    <lineage>
        <taxon>Eukaryota</taxon>
        <taxon>Fungi</taxon>
        <taxon>Dikarya</taxon>
        <taxon>Ascomycota</taxon>
        <taxon>Saccharomycotina</taxon>
        <taxon>Saccharomycetes</taxon>
        <taxon>Saccharomycetales</taxon>
        <taxon>Saccharomycetaceae</taxon>
        <taxon>Saccharomyces</taxon>
    </lineage>
</organism>